<name>AT1A1_RAT</name>
<sequence>MGKGVGRDKYEPAAVSEHGDKKSKKAKKERDMDELKKEVSMDDHKLSLDELHRKYGTDLSRGLTPARAAEILARDGPNALTPPPTTPEWVKFCRQLFGGFSMLLWIGAILCFLAYGIRSATEEEPPNDDLYLGVVLSAVVIITGCFSYYQEAKSSKIMESFKNMVPQQALVIRNGEKMSINAEDVVVGDLVEVKGGDRIPADLRIISANGCKVDNSSLTGESEPQTRSPDFTNENPLETRNIAFFSTNCVEGTARGIVVYTGDRTVMGRIATLASGLEGGQTPIAEEIEHFIHLITGVAVFLGVSFFILSLILEYTWLEAVIFLIGIIVANVPEGLLATVTVCLTLTAKRMARKNCLVKNLEAVETLGSTSTICSDKTGTLTQNRMTVAHMWFDNQIHEADTTENQSGVSFDKTSATWFALSRIAGLCNRAVFQANQENLPILKRAVAGDASESALLKCIEVCCGSVMEMREKYTKIVEIPFNSTNKYQLSIHKNPNASEPKHLLVMKGAPERILDRCSSILLHGKEQPLDEELKDAFQNAYLELGGLGERVLGFCHLLLPDEQFPEGFQFDTDEVNFPVDNLCFVGLISMIDPPRAAVPDAVGKCRSAGIKVIMVTGDHPITAKAIAKGVGIISEGNETVEDIAARLNIPVNQVNPRDAKACVVHGSDLKDMTSEELDDILRYHTEIVFARTSPQQKLIIVEGCQRQGAIVAVTGDGVNDSPALKKADIGVAMGIVGSDVSKQAADMILLDDNFASIVTGVEEGRLIFDNLKKSIAYTLTSNIPEITPFLIFIIANIPLPLGTVTILCIDLGTDMVPAISLAYEQAESDIMKRQPRNPKTDKLVNERLISMAYGQIGMIQALGGFFTYFVILAENGFLPFHLLGIRETWDDRWINDVEDSYGQQWTYEQRKIVEFTCHTAFFVSIVVVQWADLVICKTRRNSVFQQGMKNKILIFGLFEETALAAFLSYCPGMGAALRMYPLKPTWWFCAFPYSLLIFVYDEVRKLIIRRRPGGWVEKETYY</sequence>
<protein>
    <recommendedName>
        <fullName>Sodium/potassium-transporting ATPase subunit alpha-1</fullName>
        <shortName>Na(+)/K(+) ATPase alpha-1 subunit</shortName>
        <ecNumber evidence="12 16">7.2.2.13</ecNumber>
    </recommendedName>
    <alternativeName>
        <fullName>Sodium pump subunit alpha-1</fullName>
    </alternativeName>
</protein>
<proteinExistence type="evidence at protein level"/>
<reference key="1">
    <citation type="journal article" date="1986" name="Biochemistry">
        <title>Molecular cloning of three distinct forms of the Na+,K+-ATPase alpha-subunit from rat brain.</title>
        <authorList>
            <person name="Shull G.E."/>
            <person name="Greeb J."/>
            <person name="Lingrel J.B."/>
        </authorList>
    </citation>
    <scope>NUCLEOTIDE SEQUENCE [MRNA]</scope>
    <source>
        <tissue>Brain</tissue>
        <tissue>Kidney</tissue>
    </source>
</reference>
<reference key="2">
    <citation type="journal article" date="1987" name="J. Biochem.">
        <title>Primary structures of two types of alpha-subunit of rat brain Na+,K+,-ATPase deduced from cDNA sequences.</title>
        <authorList>
            <person name="Hara Y."/>
            <person name="Urayama O."/>
            <person name="Kawakami K."/>
            <person name="Nojima H."/>
            <person name="Nagamune H."/>
            <person name="Kojima T."/>
            <person name="Ohta T."/>
            <person name="Nagano K."/>
            <person name="Nakao M."/>
        </authorList>
    </citation>
    <scope>NUCLEOTIDE SEQUENCE [MRNA]</scope>
    <source>
        <tissue>Brain</tissue>
    </source>
</reference>
<reference key="3">
    <citation type="journal article" date="1987" name="J. Cell Biol.">
        <title>Three differentially expressed Na,K-ATPase alpha subunit isoforms: structural and functional implications.</title>
        <authorList>
            <person name="Herrera V.L.M."/>
            <person name="Emanuel J.R."/>
            <person name="Ruiz-Opazo N."/>
            <person name="Levenson R."/>
            <person name="Nadal-Ginard B."/>
        </authorList>
    </citation>
    <scope>NUCLEOTIDE SEQUENCE [MRNA]</scope>
</reference>
<reference key="4">
    <citation type="journal article" date="2004" name="Genome Res.">
        <title>The status, quality, and expansion of the NIH full-length cDNA project: the Mammalian Gene Collection (MGC).</title>
        <authorList>
            <consortium name="The MGC Project Team"/>
        </authorList>
    </citation>
    <scope>NUCLEOTIDE SEQUENCE [LARGE SCALE MRNA]</scope>
    <source>
        <tissue>Prostate</tissue>
    </source>
</reference>
<reference key="5">
    <citation type="submission" date="2007-07" db="UniProtKB">
        <authorList>
            <person name="Lubec G."/>
            <person name="Kang S.U."/>
        </authorList>
    </citation>
    <scope>PROTEIN SEQUENCE OF 157-162; 597-605; 630-647; 662-671 AND 744-773</scope>
    <scope>IDENTIFICATION BY MASS SPECTROMETRY</scope>
    <source>
        <strain>Sprague-Dawley</strain>
        <tissue>Brain</tissue>
    </source>
</reference>
<reference key="6">
    <citation type="journal article" date="1985" name="Proc. Natl. Acad. Sci. U.S.A.">
        <title>Molecular cloning of rat brain Na,K-ATPase alpha-subunit cDNA.</title>
        <authorList>
            <person name="Schneider J.W."/>
            <person name="Mercer R.W."/>
            <person name="Caplan M."/>
            <person name="Emanuel J.R."/>
            <person name="Sweadner K.J."/>
            <person name="Benz E.J. Jr."/>
            <person name="Levenson R."/>
        </authorList>
    </citation>
    <scope>NUCLEOTIDE SEQUENCE [MRNA] OF 489-533</scope>
    <source>
        <tissue>Brain</tissue>
    </source>
</reference>
<reference key="7">
    <citation type="journal article" date="1990" name="Biochim. Biophys. Acta">
        <title>Cloning and analysis of the 5'-flanking region of rat Na+/K(+)-ATPase alpha 1 subunit gene.</title>
        <authorList>
            <person name="Yagawa Y."/>
            <person name="Kawakami K."/>
            <person name="Nagano K."/>
        </authorList>
    </citation>
    <scope>NUCLEOTIDE SEQUENCE [GENOMIC DNA] OF 1-41</scope>
</reference>
<reference key="8">
    <citation type="journal article" date="1994" name="J. Biol. Chem.">
        <title>Identification of the phosphorylation site for cAMP-dependent protein kinase on Na+,K(+)-ATPase and effects of site-directed mutagenesis.</title>
        <authorList>
            <person name="Fisone G."/>
            <person name="Cheng S.X.-J."/>
            <person name="Nairn A.C."/>
            <person name="Czernik A.J."/>
            <person name="Hemmings H.C. Jr."/>
            <person name="Hoeoeg J.-O."/>
            <person name="Bertorello A.M."/>
            <person name="Kaiser R."/>
            <person name="Bergman T."/>
            <person name="Joernvall H."/>
            <person name="Aperia A."/>
            <person name="Greengard P."/>
        </authorList>
    </citation>
    <scope>PHOSPHORYLATION BY CAMP-DEPENDENT KINASE</scope>
</reference>
<reference key="9">
    <citation type="journal article" date="1997" name="Am. J. Physiol.">
        <title>Regulation of rat Na(+)-K(+)-ATPase activity by PKC is modulated by state of phosphorylation of Ser-943 by PKA.</title>
        <authorList>
            <person name="Cheng X.J."/>
            <person name="Hoeoeg J.O."/>
            <person name="Nairn A.C."/>
            <person name="Greengard P."/>
            <person name="Aperia A."/>
        </authorList>
    </citation>
    <scope>PHOSPHORYLATION AT SER-23 AND SER-943</scope>
</reference>
<reference key="10">
    <citation type="journal article" date="1999" name="Mol. Biol. Cell">
        <title>Insulin-induced stimulation of Na+,K(+)-ATPase activity in kidney proximal tubule cells depends on phosphorylation of the alpha-subunit at Tyr-10.</title>
        <authorList>
            <person name="Feraille E."/>
            <person name="Carranza M.L."/>
            <person name="Gonin S."/>
            <person name="Beguin P."/>
            <person name="Pedemonte C."/>
            <person name="Rousselot M."/>
            <person name="Caverzasio J."/>
            <person name="Geering K."/>
            <person name="Martin P.Y."/>
            <person name="Favre H."/>
        </authorList>
    </citation>
    <scope>PHOSPHORYLATION AT TYR-10</scope>
</reference>
<reference key="11">
    <citation type="journal article" date="1995" name="J. Biol. Chem.">
        <title>Structural basis for species-specific differences in the phosphorylation of Na,K-ATPase by protein kinase C.</title>
        <authorList>
            <person name="Feschenko M.S."/>
            <person name="Sweadner K.J."/>
        </authorList>
    </citation>
    <scope>PROTEIN SEQUENCE OF N-TERMINUS</scope>
    <scope>PHOSPHORYLATION AT SER-16 AND SER-23 BY PROTEIN KINASE C</scope>
</reference>
<reference key="12">
    <citation type="journal article" date="2000" name="Proc. Natl. Acad. Sci. U.S.A.">
        <title>Phosphoinositide-3 kinase binds to a proline-rich motif in the Na+, K+-ATPase alpha subunit and regulates its trafficking.</title>
        <authorList>
            <person name="Yudowski G.A."/>
            <person name="Efendiev R."/>
            <person name="Pedemonte C.H."/>
            <person name="Katz A.I."/>
            <person name="Berggren P.-O."/>
            <person name="Bertorello A.M."/>
        </authorList>
    </citation>
    <scope>BINDING SITE FOR PHOSPHOINOSITIDE-3 KINASE</scope>
    <scope>MUTAGENESIS OF SER-16 AND PRO-83</scope>
</reference>
<reference key="13">
    <citation type="journal article" date="2005" name="Mol. Biol. Cell">
        <title>FXYD3 (Mat-8), a new regulator of Na,K-ATPase.</title>
        <authorList>
            <person name="Crambert G."/>
            <person name="Li C."/>
            <person name="Claeys D."/>
            <person name="Geering K."/>
        </authorList>
    </citation>
    <scope>INTERACTION WITH FXYD3</scope>
</reference>
<reference key="14">
    <citation type="journal article" date="2007" name="FASEB J.">
        <title>The intracellular region of FXYD1 is sufficient to regulate cardiac Na/K ATPase.</title>
        <authorList>
            <person name="Pavlovic D."/>
            <person name="Fuller W."/>
            <person name="Shattock M.J."/>
        </authorList>
    </citation>
    <scope>INTERACTION WITH FXYD1</scope>
</reference>
<reference key="15">
    <citation type="journal article" date="2007" name="Proc. Natl. Acad. Sci. U.S.A.">
        <title>SIK1 is part of a cell sodium-sensing network that regulates active sodium transport through a calcium-dependent process.</title>
        <authorList>
            <person name="Sjostrom M."/>
            <person name="Stenstrom K."/>
            <person name="Eneling K."/>
            <person name="Zwiller J."/>
            <person name="Katz A.I."/>
            <person name="Takemori H."/>
            <person name="Bertorello A.M."/>
        </authorList>
    </citation>
    <scope>PHOSPHORYLATION</scope>
    <scope>DEPHOSPHORYLATION</scope>
    <scope>INTERACTION WITH SIK1</scope>
    <scope>CATALYTIC ACTIVITY</scope>
</reference>
<reference key="16">
    <citation type="journal article" date="2009" name="Am. J. Physiol.">
        <title>FXYD1 phosphorylation in vitro and in adult rat cardiac myocytes: threonine 69 is a novel substrate for protein kinase C.</title>
        <authorList>
            <person name="Fuller W."/>
            <person name="Howie J."/>
            <person name="McLatchie L.M."/>
            <person name="Weber R.J."/>
            <person name="Hastie C.J."/>
            <person name="Burness K."/>
            <person name="Pavlovic D."/>
            <person name="Shattock M.J."/>
        </authorList>
    </citation>
    <scope>INTERACTION WITH FXYD1</scope>
</reference>
<reference key="17">
    <citation type="journal article" date="2012" name="Nat. Commun.">
        <title>Quantitative maps of protein phosphorylation sites across 14 different rat organs and tissues.</title>
        <authorList>
            <person name="Lundby A."/>
            <person name="Secher A."/>
            <person name="Lage K."/>
            <person name="Nordsborg N.B."/>
            <person name="Dmytriyev A."/>
            <person name="Lundby C."/>
            <person name="Olsen J.V."/>
        </authorList>
    </citation>
    <scope>PHOSPHORYLATION [LARGE SCALE ANALYSIS] AT SER-40; SER-47; SER-228; SER-452 AND SER-484</scope>
    <scope>IDENTIFICATION BY MASS SPECTROMETRY [LARGE SCALE ANALYSIS]</scope>
</reference>
<reference key="18">
    <citation type="journal article" date="2013" name="J. Biol. Chem.">
        <title>A separate pool of cardiac phospholemman that does not regulate or associate with the sodium pump: multimers of phospholemman in ventricular muscle.</title>
        <authorList>
            <person name="Wypijewski K.J."/>
            <person name="Howie J."/>
            <person name="Reilly L."/>
            <person name="Tulloch L.B."/>
            <person name="Aughton K.L."/>
            <person name="McLatchie L.M."/>
            <person name="Shattock M.J."/>
            <person name="Calaghan S.C."/>
            <person name="Fuller W."/>
        </authorList>
    </citation>
    <scope>INTERACTION WITH FXYD1</scope>
</reference>
<reference key="19">
    <citation type="journal article" date="2018" name="Am. J. Hum. Genet.">
        <title>Mutations in ATP1A1 Cause Dominant Charcot-Marie-Tooth Type 2.</title>
        <authorList>
            <person name="Lassuthova P."/>
            <person name="Rebelo A.P."/>
            <person name="Ravenscroft G."/>
            <person name="Lamont P.J."/>
            <person name="Davis M.R."/>
            <person name="Manganelli F."/>
            <person name="Feely S.M."/>
            <person name="Bacon C."/>
            <person name="Brozkova D.S."/>
            <person name="Haberlova J."/>
            <person name="Mazanec R."/>
            <person name="Tao F."/>
            <person name="Saghira C."/>
            <person name="Abreu L."/>
            <person name="Courel S."/>
            <person name="Powell E."/>
            <person name="Buglo E."/>
            <person name="Bis D.M."/>
            <person name="Baxter M.F."/>
            <person name="Ong R.W."/>
            <person name="Marns L."/>
            <person name="Lee Y.C."/>
            <person name="Bai Y."/>
            <person name="Isom D.G."/>
            <person name="Barro-Soria R."/>
            <person name="Chung K.W."/>
            <person name="Scherer S.S."/>
            <person name="Larsson H.P."/>
            <person name="Laing N.G."/>
            <person name="Choi B.O."/>
            <person name="Seeman P."/>
            <person name="Shy M.E."/>
            <person name="Santoro L."/>
            <person name="Zuchner S."/>
        </authorList>
    </citation>
    <scope>SUBCELLULAR LOCATION</scope>
    <scope>TISSUE SPECIFICITY</scope>
</reference>
<reference key="20">
    <citation type="journal article" date="2018" name="Am. J. Hum. Genet.">
        <title>Germline de novo mutations in ATP1A1 cause renal hypomagnesemia, refractory seizures, and intellectual disability.</title>
        <authorList>
            <person name="Schlingmann K.P."/>
            <person name="Bandulik S."/>
            <person name="Mammen C."/>
            <person name="Tarailo-Graovac M."/>
            <person name="Holm R."/>
            <person name="Baumann M."/>
            <person name="Koenig J."/>
            <person name="Lee J.J.Y."/>
            <person name="Droegemoeller B."/>
            <person name="Imminger K."/>
            <person name="Beck B.B."/>
            <person name="Altmueller J."/>
            <person name="Thiele H."/>
            <person name="Waldegger S."/>
            <person name="Van't Hoff W."/>
            <person name="Kleta R."/>
            <person name="Warth R."/>
            <person name="van Karnebeek C.D.M."/>
            <person name="Vilsen B."/>
            <person name="Bockenhauer D."/>
            <person name="Konrad M."/>
        </authorList>
    </citation>
    <scope>MUTAGENESIS OF LEU-302; GLY-303 AND MET-859</scope>
    <scope>FUNCTION</scope>
    <scope>CATALYTIC ACTIVITY</scope>
</reference>
<reference key="21">
    <citation type="journal article" date="2006" name="Cell. Physiol. Biochem.">
        <title>An extracellular loop of the human non-gastric H,K-ATPase alpha-subunit is involved in apical plasma membrane polarization.</title>
        <authorList>
            <person name="Lerner M."/>
            <person name="Lemke D."/>
            <person name="Bertram H."/>
            <person name="Schillers H."/>
            <person name="Oberleithner H."/>
            <person name="Caplan M.J."/>
            <person name="Reinhardt J."/>
        </authorList>
    </citation>
    <scope>SUBCELLULAR LOCATION</scope>
    <scope>MUTAGENESIS OF GLU-314</scope>
</reference>
<reference key="22">
    <citation type="journal article" date="2003" name="Nat. Struct. Biol.">
        <title>ATP-induced conformational changes of the nucleotide-binding domain of Na,K-ATPase.</title>
        <authorList>
            <person name="Hilge M."/>
            <person name="Siegal G."/>
            <person name="Vuister G.W."/>
            <person name="Guntert P."/>
            <person name="Gloor S.M."/>
            <person name="Abrahams J.P."/>
        </authorList>
    </citation>
    <scope>STRUCTURE BY NMR OF 383-595 ALONE AND IN COMPLEX WITH ATP</scope>
    <scope>ATP-BINDING SITE</scope>
</reference>
<evidence type="ECO:0000250" key="1"/>
<evidence type="ECO:0000250" key="2">
    <source>
        <dbReference type="UniProtKB" id="P05023"/>
    </source>
</evidence>
<evidence type="ECO:0000250" key="3">
    <source>
        <dbReference type="UniProtKB" id="Q8VDN2"/>
    </source>
</evidence>
<evidence type="ECO:0000255" key="4"/>
<evidence type="ECO:0000256" key="5">
    <source>
        <dbReference type="SAM" id="MobiDB-lite"/>
    </source>
</evidence>
<evidence type="ECO:0000269" key="6">
    <source>
    </source>
</evidence>
<evidence type="ECO:0000269" key="7">
    <source>
    </source>
</evidence>
<evidence type="ECO:0000269" key="8">
    <source>
    </source>
</evidence>
<evidence type="ECO:0000269" key="9">
    <source>
    </source>
</evidence>
<evidence type="ECO:0000269" key="10">
    <source>
    </source>
</evidence>
<evidence type="ECO:0000269" key="11">
    <source>
    </source>
</evidence>
<evidence type="ECO:0000269" key="12">
    <source>
    </source>
</evidence>
<evidence type="ECO:0000269" key="13">
    <source>
    </source>
</evidence>
<evidence type="ECO:0000269" key="14">
    <source>
    </source>
</evidence>
<evidence type="ECO:0000269" key="15">
    <source>
    </source>
</evidence>
<evidence type="ECO:0000269" key="16">
    <source>
    </source>
</evidence>
<evidence type="ECO:0000269" key="17">
    <source>
    </source>
</evidence>
<evidence type="ECO:0000269" key="18">
    <source>
    </source>
</evidence>
<evidence type="ECO:0000269" key="19">
    <source>
    </source>
</evidence>
<evidence type="ECO:0000305" key="20"/>
<evidence type="ECO:0007744" key="21">
    <source>
    </source>
</evidence>
<evidence type="ECO:0007829" key="22">
    <source>
        <dbReference type="PDB" id="1MO7"/>
    </source>
</evidence>
<evidence type="ECO:0007829" key="23">
    <source>
        <dbReference type="PDB" id="1MO8"/>
    </source>
</evidence>
<gene>
    <name type="primary">Atp1a1</name>
</gene>
<comment type="function">
    <text evidence="3 16">This is the catalytic component of the active enzyme, which catalyzes the hydrolysis of ATP coupled with the exchange of sodium and potassium ions across the plasma membrane. This action creates the electrochemical gradient of sodium and potassium ions, providing the energy for active transport of various nutrients (PubMed:30388404). Could also be part of an osmosensory signaling pathway that senses body-fluid sodium levels and controls salt intake behavior as well as voluntary water intake to regulate sodium homeostasis (By similarity).</text>
</comment>
<comment type="catalytic activity">
    <reaction evidence="12 16">
        <text>K(+)(out) + Na(+)(in) + ATP + H2O = K(+)(in) + Na(+)(out) + ADP + phosphate + H(+)</text>
        <dbReference type="Rhea" id="RHEA:18353"/>
        <dbReference type="ChEBI" id="CHEBI:15377"/>
        <dbReference type="ChEBI" id="CHEBI:15378"/>
        <dbReference type="ChEBI" id="CHEBI:29101"/>
        <dbReference type="ChEBI" id="CHEBI:29103"/>
        <dbReference type="ChEBI" id="CHEBI:30616"/>
        <dbReference type="ChEBI" id="CHEBI:43474"/>
        <dbReference type="ChEBI" id="CHEBI:456216"/>
        <dbReference type="EC" id="7.2.2.13"/>
    </reaction>
    <physiologicalReaction direction="left-to-right" evidence="16">
        <dbReference type="Rhea" id="RHEA:18354"/>
    </physiologicalReaction>
</comment>
<comment type="subunit">
    <text evidence="2 3 9 11 12 13 14">The sodium/potassium-transporting ATPase is composed of a catalytic alpha subunit, an auxiliary non-catalytic beta subunit and an additional regulatory subunit. Interacts with regulatory subunit FXYD1 (PubMed:17283221, PubMed:19339511, PubMed:23532852). Interacts with regulatory subunit FXYD3 (PubMed:15743908). Interacts with SLC35G1 and STIM1 (By similarity). Interacts with SIK1 (PubMed:17939993). Interacts with CLN3; this interaction regulates the sodium/potassium-transporting ATPase complex localization at the plasma membrane (By similarity). Interacts with SCN7A; activates ATP1A1 P-type sodium:potassium-exchanging transporter activity which indirectly signals to nearby neurons to regulate sodium homeostasis (By similarity).</text>
</comment>
<comment type="subcellular location">
    <subcellularLocation>
        <location evidence="3">Cell membrane</location>
        <topology evidence="4">Multi-pass membrane protein</topology>
    </subcellularLocation>
    <subcellularLocation>
        <location evidence="10">Basolateral cell membrane</location>
        <topology evidence="4">Multi-pass membrane protein</topology>
    </subcellularLocation>
    <subcellularLocation>
        <location evidence="2">Cell membrane</location>
        <location evidence="2">Sarcolemma</location>
        <topology evidence="4">Multi-pass membrane protein</topology>
    </subcellularLocation>
    <subcellularLocation>
        <location evidence="15">Cell projection</location>
        <location evidence="15">Axon</location>
    </subcellularLocation>
    <subcellularLocation>
        <location evidence="2">Melanosome</location>
    </subcellularLocation>
</comment>
<comment type="tissue specificity">
    <text evidence="15">Expressed in the central nervous system, in most motor and sensory axons of the ventral and dorsal roots, as well as in the large motor neurons of the ventral horn (at protein level).</text>
</comment>
<comment type="PTM">
    <text evidence="6 12 17 18 19">Phosphorylation on Tyr-10 modulates pumping activity. Phosphorylation of Ser-943 by PKA modulates the response of ATP1A1 to PKC. Dephosphorylation by protein phosphatase 2A (PP2A) following increases in intracellular sodium, leading to increase catalytic activity.</text>
</comment>
<comment type="similarity">
    <text evidence="20">Belongs to the cation transport ATPase (P-type) (TC 3.A.3) family. Type IIC subfamily.</text>
</comment>
<keyword id="KW-0002">3D-structure</keyword>
<keyword id="KW-0007">Acetylation</keyword>
<keyword id="KW-0067">ATP-binding</keyword>
<keyword id="KW-1003">Cell membrane</keyword>
<keyword id="KW-0966">Cell projection</keyword>
<keyword id="KW-0903">Direct protein sequencing</keyword>
<keyword id="KW-0406">Ion transport</keyword>
<keyword id="KW-0460">Magnesium</keyword>
<keyword id="KW-0472">Membrane</keyword>
<keyword id="KW-0479">Metal-binding</keyword>
<keyword id="KW-0547">Nucleotide-binding</keyword>
<keyword id="KW-0597">Phosphoprotein</keyword>
<keyword id="KW-0630">Potassium</keyword>
<keyword id="KW-0633">Potassium transport</keyword>
<keyword id="KW-1185">Reference proteome</keyword>
<keyword id="KW-0915">Sodium</keyword>
<keyword id="KW-0739">Sodium transport</keyword>
<keyword id="KW-0740">Sodium/potassium transport</keyword>
<keyword id="KW-1278">Translocase</keyword>
<keyword id="KW-0812">Transmembrane</keyword>
<keyword id="KW-1133">Transmembrane helix</keyword>
<keyword id="KW-0813">Transport</keyword>
<dbReference type="EC" id="7.2.2.13" evidence="12 16"/>
<dbReference type="EMBL" id="M14511">
    <property type="protein sequence ID" value="AAA40775.1"/>
    <property type="molecule type" value="mRNA"/>
</dbReference>
<dbReference type="EMBL" id="X05882">
    <property type="protein sequence ID" value="CAA29306.1"/>
    <property type="molecule type" value="mRNA"/>
</dbReference>
<dbReference type="EMBL" id="M28647">
    <property type="protein sequence ID" value="AAA41671.1"/>
    <property type="molecule type" value="mRNA"/>
</dbReference>
<dbReference type="EMBL" id="BC061968">
    <property type="protein sequence ID" value="AAH61968.1"/>
    <property type="molecule type" value="mRNA"/>
</dbReference>
<dbReference type="EMBL" id="M11733">
    <property type="protein sequence ID" value="AAA40783.1"/>
    <property type="molecule type" value="mRNA"/>
</dbReference>
<dbReference type="EMBL" id="X53233">
    <property type="protein sequence ID" value="CAA37325.1"/>
    <property type="molecule type" value="Genomic_DNA"/>
</dbReference>
<dbReference type="EMBL" id="X53234">
    <property type="protein sequence ID" value="CAA37326.1"/>
    <property type="molecule type" value="Genomic_DNA"/>
</dbReference>
<dbReference type="PIR" id="A24639">
    <property type="entry name" value="A24639"/>
</dbReference>
<dbReference type="RefSeq" id="NP_036636.1">
    <property type="nucleotide sequence ID" value="NM_012504.1"/>
</dbReference>
<dbReference type="PDB" id="1MO7">
    <property type="method" value="NMR"/>
    <property type="chains" value="A=386-595"/>
</dbReference>
<dbReference type="PDB" id="1MO8">
    <property type="method" value="NMR"/>
    <property type="chains" value="A=386-595"/>
</dbReference>
<dbReference type="PDBsum" id="1MO7"/>
<dbReference type="PDBsum" id="1MO8"/>
<dbReference type="BMRB" id="P06685"/>
<dbReference type="SMR" id="P06685"/>
<dbReference type="BioGRID" id="246399">
    <property type="interactions" value="19"/>
</dbReference>
<dbReference type="ELM" id="P06685"/>
<dbReference type="FunCoup" id="P06685">
    <property type="interactions" value="1587"/>
</dbReference>
<dbReference type="IntAct" id="P06685">
    <property type="interactions" value="7"/>
</dbReference>
<dbReference type="MINT" id="P06685"/>
<dbReference type="STRING" id="10116.ENSRNOP00000045650"/>
<dbReference type="BindingDB" id="P06685"/>
<dbReference type="ChEMBL" id="CHEMBL3010"/>
<dbReference type="DrugCentral" id="P06685"/>
<dbReference type="GlyGen" id="P06685">
    <property type="glycosylation" value="1 site, 1 O-linked glycan (1 site)"/>
</dbReference>
<dbReference type="iPTMnet" id="P06685"/>
<dbReference type="PhosphoSitePlus" id="P06685"/>
<dbReference type="jPOST" id="P06685"/>
<dbReference type="PaxDb" id="10116-ENSRNOP00000045650"/>
<dbReference type="Ensembl" id="ENSRNOT00000040430.5">
    <property type="protein sequence ID" value="ENSRNOP00000045650.4"/>
    <property type="gene ID" value="ENSRNOG00000030019.5"/>
</dbReference>
<dbReference type="GeneID" id="24211"/>
<dbReference type="KEGG" id="rno:24211"/>
<dbReference type="UCSC" id="RGD:2167">
    <property type="organism name" value="rat"/>
</dbReference>
<dbReference type="AGR" id="RGD:2167"/>
<dbReference type="CTD" id="476"/>
<dbReference type="RGD" id="2167">
    <property type="gene designation" value="Atp1a1"/>
</dbReference>
<dbReference type="eggNOG" id="KOG0203">
    <property type="taxonomic scope" value="Eukaryota"/>
</dbReference>
<dbReference type="GeneTree" id="ENSGT00940000154840"/>
<dbReference type="HOGENOM" id="CLU_002360_3_0_1"/>
<dbReference type="InParanoid" id="P06685"/>
<dbReference type="OrthoDB" id="17678at9989"/>
<dbReference type="PhylomeDB" id="P06685"/>
<dbReference type="Reactome" id="R-RNO-5578775">
    <property type="pathway name" value="Ion homeostasis"/>
</dbReference>
<dbReference type="Reactome" id="R-RNO-936837">
    <property type="pathway name" value="Ion transport by P-type ATPases"/>
</dbReference>
<dbReference type="SABIO-RK" id="P06685"/>
<dbReference type="EvolutionaryTrace" id="P06685"/>
<dbReference type="PRO" id="PR:P06685"/>
<dbReference type="Proteomes" id="UP000002494">
    <property type="component" value="Chromosome 2"/>
</dbReference>
<dbReference type="Bgee" id="ENSRNOG00000030019">
    <property type="expression patterns" value="Expressed in kidney and 20 other cell types or tissues"/>
</dbReference>
<dbReference type="GO" id="GO:0016324">
    <property type="term" value="C:apical plasma membrane"/>
    <property type="evidence" value="ECO:0000266"/>
    <property type="project" value="RGD"/>
</dbReference>
<dbReference type="GO" id="GO:0030424">
    <property type="term" value="C:axon"/>
    <property type="evidence" value="ECO:0007669"/>
    <property type="project" value="UniProtKB-SubCell"/>
</dbReference>
<dbReference type="GO" id="GO:0016323">
    <property type="term" value="C:basolateral plasma membrane"/>
    <property type="evidence" value="ECO:0000315"/>
    <property type="project" value="UniProtKB"/>
</dbReference>
<dbReference type="GO" id="GO:0005901">
    <property type="term" value="C:caveola"/>
    <property type="evidence" value="ECO:0000314"/>
    <property type="project" value="RGD"/>
</dbReference>
<dbReference type="GO" id="GO:0005783">
    <property type="term" value="C:endoplasmic reticulum"/>
    <property type="evidence" value="ECO:0000314"/>
    <property type="project" value="BHF-UCL"/>
</dbReference>
<dbReference type="GO" id="GO:0005768">
    <property type="term" value="C:endosome"/>
    <property type="evidence" value="ECO:0000314"/>
    <property type="project" value="RGD"/>
</dbReference>
<dbReference type="GO" id="GO:0005794">
    <property type="term" value="C:Golgi apparatus"/>
    <property type="evidence" value="ECO:0000314"/>
    <property type="project" value="BHF-UCL"/>
</dbReference>
<dbReference type="GO" id="GO:0014704">
    <property type="term" value="C:intercalated disc"/>
    <property type="evidence" value="ECO:0000314"/>
    <property type="project" value="BHF-UCL"/>
</dbReference>
<dbReference type="GO" id="GO:0016328">
    <property type="term" value="C:lateral plasma membrane"/>
    <property type="evidence" value="ECO:0000266"/>
    <property type="project" value="RGD"/>
</dbReference>
<dbReference type="GO" id="GO:0042470">
    <property type="term" value="C:melanosome"/>
    <property type="evidence" value="ECO:0007669"/>
    <property type="project" value="UniProtKB-SubCell"/>
</dbReference>
<dbReference type="GO" id="GO:0016020">
    <property type="term" value="C:membrane"/>
    <property type="evidence" value="ECO:0000314"/>
    <property type="project" value="ARUK-UCL"/>
</dbReference>
<dbReference type="GO" id="GO:0031090">
    <property type="term" value="C:organelle membrane"/>
    <property type="evidence" value="ECO:0000266"/>
    <property type="project" value="RGD"/>
</dbReference>
<dbReference type="GO" id="GO:0005886">
    <property type="term" value="C:plasma membrane"/>
    <property type="evidence" value="ECO:0000314"/>
    <property type="project" value="BHF-UCL"/>
</dbReference>
<dbReference type="GO" id="GO:0014069">
    <property type="term" value="C:postsynaptic density"/>
    <property type="evidence" value="ECO:0000266"/>
    <property type="project" value="RGD"/>
</dbReference>
<dbReference type="GO" id="GO:0032991">
    <property type="term" value="C:protein-containing complex"/>
    <property type="evidence" value="ECO:0000266"/>
    <property type="project" value="RGD"/>
</dbReference>
<dbReference type="GO" id="GO:0042383">
    <property type="term" value="C:sarcolemma"/>
    <property type="evidence" value="ECO:0000314"/>
    <property type="project" value="BHF-UCL"/>
</dbReference>
<dbReference type="GO" id="GO:0005890">
    <property type="term" value="C:sodium:potassium-exchanging ATPase complex"/>
    <property type="evidence" value="ECO:0000314"/>
    <property type="project" value="ARUK-UCL"/>
</dbReference>
<dbReference type="GO" id="GO:0036126">
    <property type="term" value="C:sperm flagellum"/>
    <property type="evidence" value="ECO:0000266"/>
    <property type="project" value="RGD"/>
</dbReference>
<dbReference type="GO" id="GO:0030315">
    <property type="term" value="C:T-tubule"/>
    <property type="evidence" value="ECO:0000314"/>
    <property type="project" value="BHF-UCL"/>
</dbReference>
<dbReference type="GO" id="GO:0043531">
    <property type="term" value="F:ADP binding"/>
    <property type="evidence" value="ECO:0000314"/>
    <property type="project" value="RGD"/>
</dbReference>
<dbReference type="GO" id="GO:0030506">
    <property type="term" value="F:ankyrin binding"/>
    <property type="evidence" value="ECO:0000353"/>
    <property type="project" value="BHF-UCL"/>
</dbReference>
<dbReference type="GO" id="GO:0005524">
    <property type="term" value="F:ATP binding"/>
    <property type="evidence" value="ECO:0000314"/>
    <property type="project" value="BHF-UCL"/>
</dbReference>
<dbReference type="GO" id="GO:0016887">
    <property type="term" value="F:ATP hydrolysis activity"/>
    <property type="evidence" value="ECO:0000266"/>
    <property type="project" value="RGD"/>
</dbReference>
<dbReference type="GO" id="GO:0051117">
    <property type="term" value="F:ATPase binding"/>
    <property type="evidence" value="ECO:0000266"/>
    <property type="project" value="RGD"/>
</dbReference>
<dbReference type="GO" id="GO:0008556">
    <property type="term" value="F:P-type potassium transmembrane transporter activity"/>
    <property type="evidence" value="ECO:0000266"/>
    <property type="project" value="RGD"/>
</dbReference>
<dbReference type="GO" id="GO:0005391">
    <property type="term" value="F:P-type sodium:potassium-exchanging transporter activity"/>
    <property type="evidence" value="ECO:0000314"/>
    <property type="project" value="UniProtKB"/>
</dbReference>
<dbReference type="GO" id="GO:0016791">
    <property type="term" value="F:phosphatase activity"/>
    <property type="evidence" value="ECO:0000266"/>
    <property type="project" value="RGD"/>
</dbReference>
<dbReference type="GO" id="GO:0043548">
    <property type="term" value="F:phosphatidylinositol 3-kinase binding"/>
    <property type="evidence" value="ECO:0000353"/>
    <property type="project" value="RGD"/>
</dbReference>
<dbReference type="GO" id="GO:0030955">
    <property type="term" value="F:potassium ion binding"/>
    <property type="evidence" value="ECO:0000314"/>
    <property type="project" value="BHF-UCL"/>
</dbReference>
<dbReference type="GO" id="GO:0019904">
    <property type="term" value="F:protein domain specific binding"/>
    <property type="evidence" value="ECO:0000353"/>
    <property type="project" value="RGD"/>
</dbReference>
<dbReference type="GO" id="GO:0046982">
    <property type="term" value="F:protein heterodimerization activity"/>
    <property type="evidence" value="ECO:0000353"/>
    <property type="project" value="ARUK-UCL"/>
</dbReference>
<dbReference type="GO" id="GO:0019901">
    <property type="term" value="F:protein kinase binding"/>
    <property type="evidence" value="ECO:0000353"/>
    <property type="project" value="UniProtKB"/>
</dbReference>
<dbReference type="GO" id="GO:0051087">
    <property type="term" value="F:protein-folding chaperone binding"/>
    <property type="evidence" value="ECO:0000314"/>
    <property type="project" value="BHF-UCL"/>
</dbReference>
<dbReference type="GO" id="GO:0031402">
    <property type="term" value="F:sodium ion binding"/>
    <property type="evidence" value="ECO:0000314"/>
    <property type="project" value="RGD"/>
</dbReference>
<dbReference type="GO" id="GO:1990239">
    <property type="term" value="F:steroid hormone binding"/>
    <property type="evidence" value="ECO:0000266"/>
    <property type="project" value="RGD"/>
</dbReference>
<dbReference type="GO" id="GO:0044325">
    <property type="term" value="F:transmembrane transporter binding"/>
    <property type="evidence" value="ECO:0000266"/>
    <property type="project" value="RGD"/>
</dbReference>
<dbReference type="GO" id="GO:0060048">
    <property type="term" value="P:cardiac muscle contraction"/>
    <property type="evidence" value="ECO:0000304"/>
    <property type="project" value="BHF-UCL"/>
</dbReference>
<dbReference type="GO" id="GO:0071260">
    <property type="term" value="P:cellular response to mechanical stimulus"/>
    <property type="evidence" value="ECO:0000314"/>
    <property type="project" value="RGD"/>
</dbReference>
<dbReference type="GO" id="GO:0071383">
    <property type="term" value="P:cellular response to steroid hormone stimulus"/>
    <property type="evidence" value="ECO:0000266"/>
    <property type="project" value="RGD"/>
</dbReference>
<dbReference type="GO" id="GO:0015988">
    <property type="term" value="P:energy coupled proton transmembrane transport, against electrochemical gradient"/>
    <property type="evidence" value="ECO:0000304"/>
    <property type="project" value="RGD"/>
</dbReference>
<dbReference type="GO" id="GO:0010248">
    <property type="term" value="P:establishment or maintenance of transmembrane electrochemical gradient"/>
    <property type="evidence" value="ECO:0000305"/>
    <property type="project" value="BHF-UCL"/>
</dbReference>
<dbReference type="GO" id="GO:0060047">
    <property type="term" value="P:heart contraction"/>
    <property type="evidence" value="ECO:0000266"/>
    <property type="project" value="RGD"/>
</dbReference>
<dbReference type="GO" id="GO:0030007">
    <property type="term" value="P:intracellular potassium ion homeostasis"/>
    <property type="evidence" value="ECO:0000266"/>
    <property type="project" value="RGD"/>
</dbReference>
<dbReference type="GO" id="GO:0006883">
    <property type="term" value="P:intracellular sodium ion homeostasis"/>
    <property type="evidence" value="ECO:0000266"/>
    <property type="project" value="RGD"/>
</dbReference>
<dbReference type="GO" id="GO:0060081">
    <property type="term" value="P:membrane hyperpolarization"/>
    <property type="evidence" value="ECO:0000315"/>
    <property type="project" value="RGD"/>
</dbReference>
<dbReference type="GO" id="GO:0086009">
    <property type="term" value="P:membrane repolarization"/>
    <property type="evidence" value="ECO:0000266"/>
    <property type="project" value="RGD"/>
</dbReference>
<dbReference type="GO" id="GO:0031947">
    <property type="term" value="P:negative regulation of glucocorticoid biosynthetic process"/>
    <property type="evidence" value="ECO:0000266"/>
    <property type="project" value="RGD"/>
</dbReference>
<dbReference type="GO" id="GO:0045822">
    <property type="term" value="P:negative regulation of heart contraction"/>
    <property type="evidence" value="ECO:0000266"/>
    <property type="project" value="RGD"/>
</dbReference>
<dbReference type="GO" id="GO:0007231">
    <property type="term" value="P:osmosensory signaling pathway"/>
    <property type="evidence" value="ECO:0000266"/>
    <property type="project" value="RGD"/>
</dbReference>
<dbReference type="GO" id="GO:0045823">
    <property type="term" value="P:positive regulation of heart contraction"/>
    <property type="evidence" value="ECO:0000266"/>
    <property type="project" value="RGD"/>
</dbReference>
<dbReference type="GO" id="GO:0045989">
    <property type="term" value="P:positive regulation of striated muscle contraction"/>
    <property type="evidence" value="ECO:0000266"/>
    <property type="project" value="RGD"/>
</dbReference>
<dbReference type="GO" id="GO:1990573">
    <property type="term" value="P:potassium ion import across plasma membrane"/>
    <property type="evidence" value="ECO:0000314"/>
    <property type="project" value="BHF-UCL"/>
</dbReference>
<dbReference type="GO" id="GO:0071805">
    <property type="term" value="P:potassium ion transmembrane transport"/>
    <property type="evidence" value="ECO:0000266"/>
    <property type="project" value="RGD"/>
</dbReference>
<dbReference type="GO" id="GO:0006813">
    <property type="term" value="P:potassium ion transport"/>
    <property type="evidence" value="ECO:0000314"/>
    <property type="project" value="RGD"/>
</dbReference>
<dbReference type="GO" id="GO:1902600">
    <property type="term" value="P:proton transmembrane transport"/>
    <property type="evidence" value="ECO:0000318"/>
    <property type="project" value="GO_Central"/>
</dbReference>
<dbReference type="GO" id="GO:0008217">
    <property type="term" value="P:regulation of blood pressure"/>
    <property type="evidence" value="ECO:0000266"/>
    <property type="project" value="RGD"/>
</dbReference>
<dbReference type="GO" id="GO:0086004">
    <property type="term" value="P:regulation of cardiac muscle cell contraction"/>
    <property type="evidence" value="ECO:0000315"/>
    <property type="project" value="RGD"/>
</dbReference>
<dbReference type="GO" id="GO:0002028">
    <property type="term" value="P:regulation of sodium ion transport"/>
    <property type="evidence" value="ECO:0000314"/>
    <property type="project" value="UniProtKB"/>
</dbReference>
<dbReference type="GO" id="GO:0002026">
    <property type="term" value="P:regulation of the force of heart contraction"/>
    <property type="evidence" value="ECO:0000266"/>
    <property type="project" value="RGD"/>
</dbReference>
<dbReference type="GO" id="GO:0055119">
    <property type="term" value="P:relaxation of cardiac muscle"/>
    <property type="evidence" value="ECO:0000304"/>
    <property type="project" value="BHF-UCL"/>
</dbReference>
<dbReference type="GO" id="GO:1903416">
    <property type="term" value="P:response to glycoside"/>
    <property type="evidence" value="ECO:0000266"/>
    <property type="project" value="RGD"/>
</dbReference>
<dbReference type="GO" id="GO:0009410">
    <property type="term" value="P:response to xenobiotic stimulus"/>
    <property type="evidence" value="ECO:0000266"/>
    <property type="project" value="RGD"/>
</dbReference>
<dbReference type="GO" id="GO:0036376">
    <property type="term" value="P:sodium ion export across plasma membrane"/>
    <property type="evidence" value="ECO:0000314"/>
    <property type="project" value="BHF-UCL"/>
</dbReference>
<dbReference type="GO" id="GO:0055078">
    <property type="term" value="P:sodium ion homeostasis"/>
    <property type="evidence" value="ECO:0000266"/>
    <property type="project" value="RGD"/>
</dbReference>
<dbReference type="GO" id="GO:0035725">
    <property type="term" value="P:sodium ion transmembrane transport"/>
    <property type="evidence" value="ECO:0000266"/>
    <property type="project" value="RGD"/>
</dbReference>
<dbReference type="GO" id="GO:0006814">
    <property type="term" value="P:sodium ion transport"/>
    <property type="evidence" value="ECO:0000314"/>
    <property type="project" value="RGD"/>
</dbReference>
<dbReference type="GO" id="GO:0055085">
    <property type="term" value="P:transmembrane transport"/>
    <property type="evidence" value="ECO:0000314"/>
    <property type="project" value="BHF-UCL"/>
</dbReference>
<dbReference type="CDD" id="cd02608">
    <property type="entry name" value="P-type_ATPase_Na-K_like"/>
    <property type="match status" value="1"/>
</dbReference>
<dbReference type="FunFam" id="2.70.150.10:FF:000106">
    <property type="entry name" value="Sodium/potassium-transporting ATPase subunit alpha"/>
    <property type="match status" value="1"/>
</dbReference>
<dbReference type="FunFam" id="3.40.1110.10:FF:000001">
    <property type="entry name" value="Sodium/potassium-transporting ATPase subunit alpha"/>
    <property type="match status" value="1"/>
</dbReference>
<dbReference type="FunFam" id="3.40.50.1000:FF:000004">
    <property type="entry name" value="Sodium/potassium-transporting ATPase subunit alpha"/>
    <property type="match status" value="1"/>
</dbReference>
<dbReference type="FunFam" id="1.20.1110.10:FF:000095">
    <property type="entry name" value="Sodium/potassium-transporting ATPase subunit alpha-1"/>
    <property type="match status" value="2"/>
</dbReference>
<dbReference type="Gene3D" id="3.40.1110.10">
    <property type="entry name" value="Calcium-transporting ATPase, cytoplasmic domain N"/>
    <property type="match status" value="1"/>
</dbReference>
<dbReference type="Gene3D" id="2.70.150.10">
    <property type="entry name" value="Calcium-transporting ATPase, cytoplasmic transduction domain A"/>
    <property type="match status" value="1"/>
</dbReference>
<dbReference type="Gene3D" id="1.20.1110.10">
    <property type="entry name" value="Calcium-transporting ATPase, transmembrane domain"/>
    <property type="match status" value="1"/>
</dbReference>
<dbReference type="Gene3D" id="3.40.50.1000">
    <property type="entry name" value="HAD superfamily/HAD-like"/>
    <property type="match status" value="1"/>
</dbReference>
<dbReference type="InterPro" id="IPR006068">
    <property type="entry name" value="ATPase_P-typ_cation-transptr_C"/>
</dbReference>
<dbReference type="InterPro" id="IPR004014">
    <property type="entry name" value="ATPase_P-typ_cation-transptr_N"/>
</dbReference>
<dbReference type="InterPro" id="IPR023299">
    <property type="entry name" value="ATPase_P-typ_cyto_dom_N"/>
</dbReference>
<dbReference type="InterPro" id="IPR018303">
    <property type="entry name" value="ATPase_P-typ_P_site"/>
</dbReference>
<dbReference type="InterPro" id="IPR023298">
    <property type="entry name" value="ATPase_P-typ_TM_dom_sf"/>
</dbReference>
<dbReference type="InterPro" id="IPR008250">
    <property type="entry name" value="ATPase_P-typ_transduc_dom_A_sf"/>
</dbReference>
<dbReference type="InterPro" id="IPR050510">
    <property type="entry name" value="Cation_transp_ATPase_P-type"/>
</dbReference>
<dbReference type="InterPro" id="IPR036412">
    <property type="entry name" value="HAD-like_sf"/>
</dbReference>
<dbReference type="InterPro" id="IPR023214">
    <property type="entry name" value="HAD_sf"/>
</dbReference>
<dbReference type="InterPro" id="IPR005775">
    <property type="entry name" value="P-type_ATPase_IIC"/>
</dbReference>
<dbReference type="InterPro" id="IPR001757">
    <property type="entry name" value="P_typ_ATPase"/>
</dbReference>
<dbReference type="InterPro" id="IPR044492">
    <property type="entry name" value="P_typ_ATPase_HD_dom"/>
</dbReference>
<dbReference type="NCBIfam" id="TIGR01106">
    <property type="entry name" value="ATPase-IIC_X-K"/>
    <property type="match status" value="1"/>
</dbReference>
<dbReference type="NCBIfam" id="TIGR01494">
    <property type="entry name" value="ATPase_P-type"/>
    <property type="match status" value="2"/>
</dbReference>
<dbReference type="PANTHER" id="PTHR43294">
    <property type="entry name" value="SODIUM/POTASSIUM-TRANSPORTING ATPASE SUBUNIT ALPHA"/>
    <property type="match status" value="1"/>
</dbReference>
<dbReference type="PANTHER" id="PTHR43294:SF9">
    <property type="entry name" value="SODIUM_POTASSIUM-TRANSPORTING ATPASE SUBUNIT ALPHA-1"/>
    <property type="match status" value="1"/>
</dbReference>
<dbReference type="Pfam" id="PF13246">
    <property type="entry name" value="Cation_ATPase"/>
    <property type="match status" value="1"/>
</dbReference>
<dbReference type="Pfam" id="PF00689">
    <property type="entry name" value="Cation_ATPase_C"/>
    <property type="match status" value="1"/>
</dbReference>
<dbReference type="Pfam" id="PF00690">
    <property type="entry name" value="Cation_ATPase_N"/>
    <property type="match status" value="1"/>
</dbReference>
<dbReference type="Pfam" id="PF00122">
    <property type="entry name" value="E1-E2_ATPase"/>
    <property type="match status" value="1"/>
</dbReference>
<dbReference type="PRINTS" id="PR00119">
    <property type="entry name" value="CATATPASE"/>
</dbReference>
<dbReference type="PRINTS" id="PR00121">
    <property type="entry name" value="NAKATPASE"/>
</dbReference>
<dbReference type="SFLD" id="SFLDS00003">
    <property type="entry name" value="Haloacid_Dehalogenase"/>
    <property type="match status" value="1"/>
</dbReference>
<dbReference type="SFLD" id="SFLDF00027">
    <property type="entry name" value="p-type_atpase"/>
    <property type="match status" value="1"/>
</dbReference>
<dbReference type="SMART" id="SM00831">
    <property type="entry name" value="Cation_ATPase_N"/>
    <property type="match status" value="1"/>
</dbReference>
<dbReference type="SUPFAM" id="SSF81653">
    <property type="entry name" value="Calcium ATPase, transduction domain A"/>
    <property type="match status" value="1"/>
</dbReference>
<dbReference type="SUPFAM" id="SSF81665">
    <property type="entry name" value="Calcium ATPase, transmembrane domain M"/>
    <property type="match status" value="1"/>
</dbReference>
<dbReference type="SUPFAM" id="SSF56784">
    <property type="entry name" value="HAD-like"/>
    <property type="match status" value="1"/>
</dbReference>
<dbReference type="SUPFAM" id="SSF81660">
    <property type="entry name" value="Metal cation-transporting ATPase, ATP-binding domain N"/>
    <property type="match status" value="1"/>
</dbReference>
<dbReference type="PROSITE" id="PS00154">
    <property type="entry name" value="ATPASE_E1_E2"/>
    <property type="match status" value="1"/>
</dbReference>
<organism>
    <name type="scientific">Rattus norvegicus</name>
    <name type="common">Rat</name>
    <dbReference type="NCBI Taxonomy" id="10116"/>
    <lineage>
        <taxon>Eukaryota</taxon>
        <taxon>Metazoa</taxon>
        <taxon>Chordata</taxon>
        <taxon>Craniata</taxon>
        <taxon>Vertebrata</taxon>
        <taxon>Euteleostomi</taxon>
        <taxon>Mammalia</taxon>
        <taxon>Eutheria</taxon>
        <taxon>Euarchontoglires</taxon>
        <taxon>Glires</taxon>
        <taxon>Rodentia</taxon>
        <taxon>Myomorpha</taxon>
        <taxon>Muroidea</taxon>
        <taxon>Muridae</taxon>
        <taxon>Murinae</taxon>
        <taxon>Rattus</taxon>
    </lineage>
</organism>
<feature type="propeptide" id="PRO_0000002489" evidence="18">
    <location>
        <begin position="1"/>
        <end position="5"/>
    </location>
</feature>
<feature type="chain" id="PRO_0000002490" description="Sodium/potassium-transporting ATPase subunit alpha-1">
    <location>
        <begin position="6"/>
        <end position="1023"/>
    </location>
</feature>
<feature type="topological domain" description="Cytoplasmic" evidence="4">
    <location>
        <begin position="6"/>
        <end position="87"/>
    </location>
</feature>
<feature type="transmembrane region" description="Helical" evidence="4">
    <location>
        <begin position="88"/>
        <end position="108"/>
    </location>
</feature>
<feature type="topological domain" description="Extracellular" evidence="4">
    <location>
        <begin position="109"/>
        <end position="131"/>
    </location>
</feature>
<feature type="transmembrane region" description="Helical" evidence="4">
    <location>
        <begin position="132"/>
        <end position="152"/>
    </location>
</feature>
<feature type="topological domain" description="Cytoplasmic" evidence="4">
    <location>
        <begin position="153"/>
        <end position="288"/>
    </location>
</feature>
<feature type="transmembrane region" description="Helical" evidence="4">
    <location>
        <begin position="289"/>
        <end position="308"/>
    </location>
</feature>
<feature type="topological domain" description="Extracellular" evidence="4">
    <location>
        <begin position="309"/>
        <end position="320"/>
    </location>
</feature>
<feature type="transmembrane region" description="Helical" evidence="4">
    <location>
        <begin position="321"/>
        <end position="338"/>
    </location>
</feature>
<feature type="topological domain" description="Cytoplasmic" evidence="4">
    <location>
        <begin position="339"/>
        <end position="772"/>
    </location>
</feature>
<feature type="transmembrane region" description="Helical" evidence="4">
    <location>
        <begin position="773"/>
        <end position="792"/>
    </location>
</feature>
<feature type="topological domain" description="Extracellular" evidence="4">
    <location>
        <begin position="793"/>
        <end position="802"/>
    </location>
</feature>
<feature type="transmembrane region" description="Helical" evidence="4">
    <location>
        <begin position="803"/>
        <end position="823"/>
    </location>
</feature>
<feature type="topological domain" description="Cytoplasmic" evidence="4">
    <location>
        <begin position="824"/>
        <end position="843"/>
    </location>
</feature>
<feature type="transmembrane region" description="Helical" evidence="4">
    <location>
        <begin position="844"/>
        <end position="866"/>
    </location>
</feature>
<feature type="topological domain" description="Extracellular" evidence="4">
    <location>
        <begin position="867"/>
        <end position="918"/>
    </location>
</feature>
<feature type="transmembrane region" description="Helical" evidence="4">
    <location>
        <begin position="919"/>
        <end position="938"/>
    </location>
</feature>
<feature type="topological domain" description="Cytoplasmic" evidence="4">
    <location>
        <begin position="939"/>
        <end position="951"/>
    </location>
</feature>
<feature type="transmembrane region" description="Helical" evidence="4">
    <location>
        <begin position="952"/>
        <end position="970"/>
    </location>
</feature>
<feature type="topological domain" description="Extracellular" evidence="4">
    <location>
        <begin position="971"/>
        <end position="985"/>
    </location>
</feature>
<feature type="transmembrane region" description="Helical" evidence="4">
    <location>
        <begin position="986"/>
        <end position="1006"/>
    </location>
</feature>
<feature type="topological domain" description="Cytoplasmic" evidence="4">
    <location>
        <begin position="1007"/>
        <end position="1023"/>
    </location>
</feature>
<feature type="region of interest" description="Disordered" evidence="5">
    <location>
        <begin position="1"/>
        <end position="38"/>
    </location>
</feature>
<feature type="region of interest" description="Phosphoinositide-3 kinase binding">
    <location>
        <begin position="82"/>
        <end position="84"/>
    </location>
</feature>
<feature type="region of interest" description="Disordered" evidence="5">
    <location>
        <begin position="216"/>
        <end position="235"/>
    </location>
</feature>
<feature type="region of interest" description="Mediates interaction with SCN7A" evidence="3">
    <location>
        <begin position="596"/>
        <end position="717"/>
    </location>
</feature>
<feature type="compositionally biased region" description="Basic and acidic residues" evidence="5">
    <location>
        <begin position="1"/>
        <end position="11"/>
    </location>
</feature>
<feature type="compositionally biased region" description="Basic and acidic residues" evidence="5">
    <location>
        <begin position="28"/>
        <end position="38"/>
    </location>
</feature>
<feature type="active site" description="4-aspartylphosphate intermediate" evidence="1">
    <location>
        <position position="376"/>
    </location>
</feature>
<feature type="binding site" evidence="8">
    <location>
        <position position="487"/>
    </location>
    <ligand>
        <name>ATP</name>
        <dbReference type="ChEBI" id="CHEBI:30616"/>
    </ligand>
</feature>
<feature type="binding site" evidence="1">
    <location>
        <position position="717"/>
    </location>
    <ligand>
        <name>Mg(2+)</name>
        <dbReference type="ChEBI" id="CHEBI:18420"/>
    </ligand>
</feature>
<feature type="binding site" evidence="1">
    <location>
        <position position="721"/>
    </location>
    <ligand>
        <name>Mg(2+)</name>
        <dbReference type="ChEBI" id="CHEBI:18420"/>
    </ligand>
</feature>
<feature type="modified residue" description="N6-acetyllysine" evidence="3">
    <location>
        <position position="9"/>
    </location>
</feature>
<feature type="modified residue" description="Phosphotyrosine" evidence="6">
    <location>
        <position position="10"/>
    </location>
</feature>
<feature type="modified residue" description="Phosphoserine; by PKC" evidence="18">
    <location>
        <position position="16"/>
    </location>
</feature>
<feature type="modified residue" description="N6-acetyllysine" evidence="3">
    <location>
        <position position="21"/>
    </location>
</feature>
<feature type="modified residue" description="Phosphoserine; by PKC" evidence="18 19">
    <location>
        <position position="23"/>
    </location>
</feature>
<feature type="modified residue" description="Phosphoserine" evidence="21">
    <location>
        <position position="40"/>
    </location>
</feature>
<feature type="modified residue" description="Phosphoserine" evidence="21">
    <location>
        <position position="47"/>
    </location>
</feature>
<feature type="modified residue" description="Phosphoserine" evidence="21">
    <location>
        <position position="228"/>
    </location>
</feature>
<feature type="modified residue" description="Phosphotyrosine" evidence="3">
    <location>
        <position position="260"/>
    </location>
</feature>
<feature type="modified residue" description="Phosphoserine" evidence="21">
    <location>
        <position position="452"/>
    </location>
</feature>
<feature type="modified residue" description="Phosphoserine" evidence="21">
    <location>
        <position position="484"/>
    </location>
</feature>
<feature type="modified residue" description="Phosphotyrosine" evidence="2">
    <location>
        <position position="542"/>
    </location>
</feature>
<feature type="modified residue" description="N6-succinyllysine" evidence="3">
    <location>
        <position position="661"/>
    </location>
</feature>
<feature type="modified residue" description="Phosphoserine" evidence="3">
    <location>
        <position position="668"/>
    </location>
</feature>
<feature type="modified residue" description="Phosphoserine" evidence="3">
    <location>
        <position position="675"/>
    </location>
</feature>
<feature type="modified residue" description="Phosphoserine; by PKA" evidence="19">
    <location>
        <position position="943"/>
    </location>
</feature>
<feature type="mutagenesis site" description="Dopamine fails to increase phosphoinositide-3 kinase activity and to promote its interaction with Na(+)/K(+) ATPase." evidence="7">
    <original>S</original>
    <variation>A</variation>
    <location>
        <position position="16"/>
    </location>
</feature>
<feature type="mutagenesis site" description="Dopamine fails to increase phosphoinositide-3 kinase activity and to promote its interaction with Na(+)/K(+) ATPase." evidence="7">
    <original>P</original>
    <variation>R</variation>
    <location>
        <position position="83"/>
    </location>
</feature>
<feature type="mutagenesis site" description="Results in altered sodium and potassium transport." evidence="16">
    <original>L</original>
    <variation>R</variation>
    <location>
        <position position="302"/>
    </location>
</feature>
<feature type="mutagenesis site" description="Results in altered sodium and potassium transport." evidence="16">
    <original>G</original>
    <variation>R</variation>
    <location>
        <position position="303"/>
    </location>
</feature>
<feature type="mutagenesis site" description="Abolishes targeting to the basolateral plasma membrane." evidence="10">
    <original>E</original>
    <variation>K</variation>
    <location>
        <position position="314"/>
    </location>
</feature>
<feature type="mutagenesis site" description="Results in altered sodium and potassium transport." evidence="16">
    <original>M</original>
    <variation>R</variation>
    <location>
        <position position="859"/>
    </location>
</feature>
<feature type="sequence conflict" description="In Ref. 3; AAA41671." evidence="20" ref="3">
    <original>AA</original>
    <variation>PV</variation>
    <location>
        <begin position="68"/>
        <end position="69"/>
    </location>
</feature>
<feature type="sequence conflict" description="In Ref. 3; AAA41671." evidence="20" ref="3">
    <original>G</original>
    <variation>E</variation>
    <location>
        <position position="175"/>
    </location>
</feature>
<feature type="sequence conflict" description="In Ref. 3; AAA41671." evidence="20" ref="3">
    <original>G</original>
    <variation>V</variation>
    <location>
        <position position="188"/>
    </location>
</feature>
<feature type="sequence conflict" description="In Ref. 3; AAA41671." evidence="20" ref="3">
    <original>G</original>
    <variation>V</variation>
    <location>
        <position position="335"/>
    </location>
</feature>
<feature type="strand" evidence="22">
    <location>
        <begin position="394"/>
        <end position="396"/>
    </location>
</feature>
<feature type="strand" evidence="22">
    <location>
        <begin position="403"/>
        <end position="405"/>
    </location>
</feature>
<feature type="helix" evidence="22">
    <location>
        <begin position="416"/>
        <end position="427"/>
    </location>
</feature>
<feature type="strand" evidence="22">
    <location>
        <begin position="431"/>
        <end position="435"/>
    </location>
</feature>
<feature type="strand" evidence="22">
    <location>
        <begin position="438"/>
        <end position="440"/>
    </location>
</feature>
<feature type="helix" evidence="23">
    <location>
        <begin position="442"/>
        <end position="444"/>
    </location>
</feature>
<feature type="strand" evidence="22">
    <location>
        <begin position="447"/>
        <end position="449"/>
    </location>
</feature>
<feature type="turn" evidence="22">
    <location>
        <begin position="451"/>
        <end position="453"/>
    </location>
</feature>
<feature type="helix" evidence="22">
    <location>
        <begin position="454"/>
        <end position="461"/>
    </location>
</feature>
<feature type="turn" evidence="22">
    <location>
        <begin position="462"/>
        <end position="464"/>
    </location>
</feature>
<feature type="helix" evidence="22">
    <location>
        <begin position="467"/>
        <end position="473"/>
    </location>
</feature>
<feature type="strand" evidence="22">
    <location>
        <begin position="478"/>
        <end position="480"/>
    </location>
</feature>
<feature type="turn" evidence="23">
    <location>
        <begin position="483"/>
        <end position="485"/>
    </location>
</feature>
<feature type="strand" evidence="22">
    <location>
        <begin position="489"/>
        <end position="494"/>
    </location>
</feature>
<feature type="strand" evidence="22">
    <location>
        <begin position="496"/>
        <end position="500"/>
    </location>
</feature>
<feature type="strand" evidence="22">
    <location>
        <begin position="502"/>
        <end position="509"/>
    </location>
</feature>
<feature type="helix" evidence="22">
    <location>
        <begin position="511"/>
        <end position="515"/>
    </location>
</feature>
<feature type="strand" evidence="22">
    <location>
        <begin position="518"/>
        <end position="521"/>
    </location>
</feature>
<feature type="strand" evidence="23">
    <location>
        <begin position="526"/>
        <end position="529"/>
    </location>
</feature>
<feature type="helix" evidence="22">
    <location>
        <begin position="532"/>
        <end position="546"/>
    </location>
</feature>
<feature type="strand" evidence="23">
    <location>
        <begin position="556"/>
        <end position="558"/>
    </location>
</feature>
<feature type="turn" evidence="22">
    <location>
        <begin position="562"/>
        <end position="564"/>
    </location>
</feature>
<feature type="turn" evidence="22">
    <location>
        <begin position="572"/>
        <end position="574"/>
    </location>
</feature>
<accession>P06685</accession>
<accession>Q64609</accession>